<gene>
    <name evidence="1" type="primary">anmK</name>
    <name type="ordered locus">ACIAD0011</name>
</gene>
<sequence length="376" mass="41661">MTAIYIGVMTGTSMDGVDFVAASFDPLHIHATLTLPFEPALRDELMALTLPGDNEIDRMGKADVGLAKLIGHGINMLIEQNHLDRHVIKAIGSHGQTIRHRPEHGFTLQIGDPHIITELTGIPVISDFRRRDMAAGGQGAPLVPAFHQAIFQHSTIHRVILNLGGIANVSLLPAGNPDGVYGFDTGPANILMDAWCERYTGHPYDENGNWAAYGQPIRALLERLQAHEFFSKKPPKSTGREDFNLDWLDDQLADWRNDELEYDELEDTPENVQATLLKLTTRAIKKAIYRSELDTGEVYVCGGGAYNSHLLEQLRWRLRKHHWSVQSTSVLGLSPTWVEATAFAWLAMRFMQQQSANLPSVTGAAGFRILGTITSV</sequence>
<feature type="chain" id="PRO_0000249966" description="Anhydro-N-acetylmuramic acid kinase">
    <location>
        <begin position="1"/>
        <end position="376"/>
    </location>
</feature>
<feature type="binding site" evidence="1">
    <location>
        <begin position="11"/>
        <end position="18"/>
    </location>
    <ligand>
        <name>ATP</name>
        <dbReference type="ChEBI" id="CHEBI:30616"/>
    </ligand>
</feature>
<dbReference type="EC" id="2.7.1.170" evidence="1"/>
<dbReference type="EMBL" id="CR543861">
    <property type="protein sequence ID" value="CAG66996.1"/>
    <property type="molecule type" value="Genomic_DNA"/>
</dbReference>
<dbReference type="RefSeq" id="WP_004930042.1">
    <property type="nucleotide sequence ID" value="NC_005966.1"/>
</dbReference>
<dbReference type="SMR" id="Q6FG11"/>
<dbReference type="STRING" id="202950.GCA_001485005_03167"/>
<dbReference type="GeneID" id="45232542"/>
<dbReference type="KEGG" id="aci:ACIAD0011"/>
<dbReference type="eggNOG" id="COG2377">
    <property type="taxonomic scope" value="Bacteria"/>
</dbReference>
<dbReference type="HOGENOM" id="CLU_038782_0_0_6"/>
<dbReference type="OrthoDB" id="9763949at2"/>
<dbReference type="BioCyc" id="ASP62977:ACIAD_RS00050-MONOMER"/>
<dbReference type="UniPathway" id="UPA00343"/>
<dbReference type="UniPathway" id="UPA00544"/>
<dbReference type="Proteomes" id="UP000000430">
    <property type="component" value="Chromosome"/>
</dbReference>
<dbReference type="GO" id="GO:0005524">
    <property type="term" value="F:ATP binding"/>
    <property type="evidence" value="ECO:0007669"/>
    <property type="project" value="UniProtKB-UniRule"/>
</dbReference>
<dbReference type="GO" id="GO:0016301">
    <property type="term" value="F:kinase activity"/>
    <property type="evidence" value="ECO:0007669"/>
    <property type="project" value="UniProtKB-KW"/>
</dbReference>
<dbReference type="GO" id="GO:0016773">
    <property type="term" value="F:phosphotransferase activity, alcohol group as acceptor"/>
    <property type="evidence" value="ECO:0007669"/>
    <property type="project" value="UniProtKB-UniRule"/>
</dbReference>
<dbReference type="GO" id="GO:0097175">
    <property type="term" value="P:1,6-anhydro-N-acetyl-beta-muramic acid catabolic process"/>
    <property type="evidence" value="ECO:0007669"/>
    <property type="project" value="UniProtKB-UniRule"/>
</dbReference>
<dbReference type="GO" id="GO:0006040">
    <property type="term" value="P:amino sugar metabolic process"/>
    <property type="evidence" value="ECO:0007669"/>
    <property type="project" value="InterPro"/>
</dbReference>
<dbReference type="GO" id="GO:0009254">
    <property type="term" value="P:peptidoglycan turnover"/>
    <property type="evidence" value="ECO:0007669"/>
    <property type="project" value="UniProtKB-UniRule"/>
</dbReference>
<dbReference type="CDD" id="cd24050">
    <property type="entry name" value="ASKHA_NBD_ANMK"/>
    <property type="match status" value="1"/>
</dbReference>
<dbReference type="Gene3D" id="3.30.420.40">
    <property type="match status" value="2"/>
</dbReference>
<dbReference type="HAMAP" id="MF_01270">
    <property type="entry name" value="AnhMurNAc_kinase"/>
    <property type="match status" value="1"/>
</dbReference>
<dbReference type="InterPro" id="IPR005338">
    <property type="entry name" value="Anhydro_N_Ac-Mur_kinase"/>
</dbReference>
<dbReference type="InterPro" id="IPR043129">
    <property type="entry name" value="ATPase_NBD"/>
</dbReference>
<dbReference type="NCBIfam" id="NF007139">
    <property type="entry name" value="PRK09585.1-3"/>
    <property type="match status" value="1"/>
</dbReference>
<dbReference type="PANTHER" id="PTHR30605">
    <property type="entry name" value="ANHYDRO-N-ACETYLMURAMIC ACID KINASE"/>
    <property type="match status" value="1"/>
</dbReference>
<dbReference type="PANTHER" id="PTHR30605:SF0">
    <property type="entry name" value="ANHYDRO-N-ACETYLMURAMIC ACID KINASE"/>
    <property type="match status" value="1"/>
</dbReference>
<dbReference type="Pfam" id="PF03702">
    <property type="entry name" value="AnmK"/>
    <property type="match status" value="1"/>
</dbReference>
<dbReference type="SUPFAM" id="SSF53067">
    <property type="entry name" value="Actin-like ATPase domain"/>
    <property type="match status" value="1"/>
</dbReference>
<organism>
    <name type="scientific">Acinetobacter baylyi (strain ATCC 33305 / BD413 / ADP1)</name>
    <dbReference type="NCBI Taxonomy" id="62977"/>
    <lineage>
        <taxon>Bacteria</taxon>
        <taxon>Pseudomonadati</taxon>
        <taxon>Pseudomonadota</taxon>
        <taxon>Gammaproteobacteria</taxon>
        <taxon>Moraxellales</taxon>
        <taxon>Moraxellaceae</taxon>
        <taxon>Acinetobacter</taxon>
    </lineage>
</organism>
<accession>Q6FG11</accession>
<keyword id="KW-0067">ATP-binding</keyword>
<keyword id="KW-0119">Carbohydrate metabolism</keyword>
<keyword id="KW-0418">Kinase</keyword>
<keyword id="KW-0547">Nucleotide-binding</keyword>
<keyword id="KW-0808">Transferase</keyword>
<name>ANMK_ACIAD</name>
<comment type="function">
    <text evidence="1">Catalyzes the specific phosphorylation of 1,6-anhydro-N-acetylmuramic acid (anhMurNAc) with the simultaneous cleavage of the 1,6-anhydro ring, generating MurNAc-6-P. Is required for the utilization of anhMurNAc either imported from the medium or derived from its own cell wall murein, and thus plays a role in cell wall recycling.</text>
</comment>
<comment type="catalytic activity">
    <reaction evidence="1">
        <text>1,6-anhydro-N-acetyl-beta-muramate + ATP + H2O = N-acetyl-D-muramate 6-phosphate + ADP + H(+)</text>
        <dbReference type="Rhea" id="RHEA:24952"/>
        <dbReference type="ChEBI" id="CHEBI:15377"/>
        <dbReference type="ChEBI" id="CHEBI:15378"/>
        <dbReference type="ChEBI" id="CHEBI:30616"/>
        <dbReference type="ChEBI" id="CHEBI:58690"/>
        <dbReference type="ChEBI" id="CHEBI:58722"/>
        <dbReference type="ChEBI" id="CHEBI:456216"/>
        <dbReference type="EC" id="2.7.1.170"/>
    </reaction>
</comment>
<comment type="pathway">
    <text evidence="1">Amino-sugar metabolism; 1,6-anhydro-N-acetylmuramate degradation.</text>
</comment>
<comment type="pathway">
    <text evidence="1">Cell wall biogenesis; peptidoglycan recycling.</text>
</comment>
<comment type="similarity">
    <text evidence="1">Belongs to the anhydro-N-acetylmuramic acid kinase family.</text>
</comment>
<reference key="1">
    <citation type="journal article" date="2004" name="Nucleic Acids Res.">
        <title>Unique features revealed by the genome sequence of Acinetobacter sp. ADP1, a versatile and naturally transformation competent bacterium.</title>
        <authorList>
            <person name="Barbe V."/>
            <person name="Vallenet D."/>
            <person name="Fonknechten N."/>
            <person name="Kreimeyer A."/>
            <person name="Oztas S."/>
            <person name="Labarre L."/>
            <person name="Cruveiller S."/>
            <person name="Robert C."/>
            <person name="Duprat S."/>
            <person name="Wincker P."/>
            <person name="Ornston L.N."/>
            <person name="Weissenbach J."/>
            <person name="Marliere P."/>
            <person name="Cohen G.N."/>
            <person name="Medigue C."/>
        </authorList>
    </citation>
    <scope>NUCLEOTIDE SEQUENCE [LARGE SCALE GENOMIC DNA]</scope>
    <source>
        <strain>ATCC 33305 / BD413 / ADP1</strain>
    </source>
</reference>
<evidence type="ECO:0000255" key="1">
    <source>
        <dbReference type="HAMAP-Rule" id="MF_01270"/>
    </source>
</evidence>
<proteinExistence type="inferred from homology"/>
<protein>
    <recommendedName>
        <fullName evidence="1">Anhydro-N-acetylmuramic acid kinase</fullName>
        <ecNumber evidence="1">2.7.1.170</ecNumber>
    </recommendedName>
    <alternativeName>
        <fullName evidence="1">AnhMurNAc kinase</fullName>
    </alternativeName>
</protein>